<keyword id="KW-0240">DNA-directed RNA polymerase</keyword>
<keyword id="KW-0548">Nucleotidyltransferase</keyword>
<keyword id="KW-1185">Reference proteome</keyword>
<keyword id="KW-0804">Transcription</keyword>
<keyword id="KW-0808">Transferase</keyword>
<gene>
    <name evidence="1" type="primary">rpoB</name>
    <name type="ordered locus">FP1176</name>
</gene>
<protein>
    <recommendedName>
        <fullName evidence="1">DNA-directed RNA polymerase subunit beta</fullName>
        <shortName evidence="1">RNAP subunit beta</shortName>
        <ecNumber evidence="1">2.7.7.6</ecNumber>
    </recommendedName>
    <alternativeName>
        <fullName evidence="1">RNA polymerase subunit beta</fullName>
    </alternativeName>
    <alternativeName>
        <fullName evidence="1">Transcriptase subunit beta</fullName>
    </alternativeName>
</protein>
<organism>
    <name type="scientific">Flavobacterium psychrophilum (strain ATCC 49511 / DSM 21280 / CIP 103535 / JIP02/86)</name>
    <dbReference type="NCBI Taxonomy" id="402612"/>
    <lineage>
        <taxon>Bacteria</taxon>
        <taxon>Pseudomonadati</taxon>
        <taxon>Bacteroidota</taxon>
        <taxon>Flavobacteriia</taxon>
        <taxon>Flavobacteriales</taxon>
        <taxon>Flavobacteriaceae</taxon>
        <taxon>Flavobacterium</taxon>
    </lineage>
</organism>
<sequence>MITNQTERLNFASTKNIPAYPDFLDVQVKSFQDFFQLETKSDERGNEGLYNTFMENFPITDTRNNFVLEFIDYFVDPPRYTIQECIERGLTYSVPLKARLKLYCTDPEHEDFETIVQDVYLGTIPYMTPSGTFVINGAERVVVSQLHRSPGVFFGQSFHANGTKLYSARVIPFKGSWIEFATDINSVMYAYIDRKKKLPVTTLFRAIGFQSDKDILEIFDLAEEIKVSKSGLKKYIGRKLAARVLNTWHEDFVDEDTGEVVSIERNEIILDRDTILDKDNVEEIVESNVKSILLHKEDNNVVDYSIIHNTLQKDPTNSEKEAVEHIYRQLRNAEPPDEETARGIIDKLFFSDQRYNLGEVGRYRINKKLGLDTPMEKQVLTKEDIITIVKYLIELINAKADIDDIDHLSNRRVRTVGEQLSQQFGVGLARMARTIRERMNVRDNEVFTPIDLINAKTLSSVINSFFGTNQLSQFMDQTNPLAEITHKRRLSALGPGGLSRERAGFEVRDVHYTHYGRLCPIETPEGPNIGLISSLGVYAKVNGMGFIETPYRKVTNGVVDLTSVPKYLSAEEEEGMLIAQANIQMDENGKITADNVIARQEGDFPVIDPTAVHYTDVAPNQIASISASLIPFLEHDDANRALMGSNMMRQAVPLIRPEAPIVGTGLERQVASDSRVLINAEGAGVVEYVDADMITIKYDRTDAERAVSFESDEKTYKLIKFRKTNQGTSINLKPIVRKGDKVIKGQVLCEGYATQNGELALGRNLKVAFMPWKGYNFEDAIVISEKVVRDDIFTSIHVDDYSLEVRDTKLGNEELTNDIPNVSEEATKDLDENGMIRIGAEVKPGDILIGKITPKGESDPTPEEKLLRAIFGDKAGDVKDASLKASPSLHGVVLDKKLFARAVKDKRKRTQDKDALSDLEMEFEVKFVELKDKLVDKLFTIVNGKTSQGVMNDLGEEVLPKGKKYTQKMLYAVEDFAHLTRGQWVADDETNKMVNDLIHNYKIKLNDLQGALRREKFTITVGDELPAGILKLAKVYIAKKRKLKVGDKMAGRHGNKGIVARIVRHEDMPFLEDGTPVDIVLNPLGVPSRMNIGQIYETVLGWAGQNLGRKYATPIFDGASLDQINAITDEAGVPRFGHTHLYDGGTGERFHQAATVGVIYMLKLGHMVDDKMHARSIGPYSLITQQPLGGKAQFGGQRFGEMEVWALEAYGASSTLREILTVKSDDVIGRAKTYEAIVKGETMPEPGLPESFNVLMHELKGLGLDIRLEE</sequence>
<name>RPOB_FLAPJ</name>
<dbReference type="EC" id="2.7.7.6" evidence="1"/>
<dbReference type="EMBL" id="AM398681">
    <property type="protein sequence ID" value="CAL43263.1"/>
    <property type="molecule type" value="Genomic_DNA"/>
</dbReference>
<dbReference type="RefSeq" id="WP_011963312.1">
    <property type="nucleotide sequence ID" value="NC_009613.3"/>
</dbReference>
<dbReference type="RefSeq" id="YP_001296074.1">
    <property type="nucleotide sequence ID" value="NC_009613.3"/>
</dbReference>
<dbReference type="SMR" id="A6GYU0"/>
<dbReference type="STRING" id="402612.FP1176"/>
<dbReference type="EnsemblBacteria" id="CAL43263">
    <property type="protein sequence ID" value="CAL43263"/>
    <property type="gene ID" value="FP1176"/>
</dbReference>
<dbReference type="GeneID" id="66553080"/>
<dbReference type="KEGG" id="fps:FP1176"/>
<dbReference type="PATRIC" id="fig|402612.5.peg.1193"/>
<dbReference type="eggNOG" id="COG0085">
    <property type="taxonomic scope" value="Bacteria"/>
</dbReference>
<dbReference type="HOGENOM" id="CLU_000524_4_1_10"/>
<dbReference type="OrthoDB" id="9803954at2"/>
<dbReference type="Proteomes" id="UP000006394">
    <property type="component" value="Chromosome"/>
</dbReference>
<dbReference type="GO" id="GO:0000428">
    <property type="term" value="C:DNA-directed RNA polymerase complex"/>
    <property type="evidence" value="ECO:0007669"/>
    <property type="project" value="UniProtKB-KW"/>
</dbReference>
<dbReference type="GO" id="GO:0003677">
    <property type="term" value="F:DNA binding"/>
    <property type="evidence" value="ECO:0007669"/>
    <property type="project" value="UniProtKB-UniRule"/>
</dbReference>
<dbReference type="GO" id="GO:0003899">
    <property type="term" value="F:DNA-directed RNA polymerase activity"/>
    <property type="evidence" value="ECO:0007669"/>
    <property type="project" value="UniProtKB-UniRule"/>
</dbReference>
<dbReference type="GO" id="GO:0032549">
    <property type="term" value="F:ribonucleoside binding"/>
    <property type="evidence" value="ECO:0007669"/>
    <property type="project" value="InterPro"/>
</dbReference>
<dbReference type="GO" id="GO:0006351">
    <property type="term" value="P:DNA-templated transcription"/>
    <property type="evidence" value="ECO:0007669"/>
    <property type="project" value="UniProtKB-UniRule"/>
</dbReference>
<dbReference type="CDD" id="cd00653">
    <property type="entry name" value="RNA_pol_B_RPB2"/>
    <property type="match status" value="1"/>
</dbReference>
<dbReference type="Gene3D" id="2.40.50.100">
    <property type="match status" value="1"/>
</dbReference>
<dbReference type="Gene3D" id="2.40.50.150">
    <property type="match status" value="1"/>
</dbReference>
<dbReference type="Gene3D" id="3.90.1100.10">
    <property type="match status" value="1"/>
</dbReference>
<dbReference type="Gene3D" id="2.40.270.10">
    <property type="entry name" value="DNA-directed RNA polymerase, subunit 2, domain 6"/>
    <property type="match status" value="3"/>
</dbReference>
<dbReference type="Gene3D" id="3.90.1800.10">
    <property type="entry name" value="RNA polymerase alpha subunit dimerisation domain"/>
    <property type="match status" value="1"/>
</dbReference>
<dbReference type="Gene3D" id="3.90.1110.10">
    <property type="entry name" value="RNA polymerase Rpb2, domain 2"/>
    <property type="match status" value="1"/>
</dbReference>
<dbReference type="HAMAP" id="MF_01321">
    <property type="entry name" value="RNApol_bact_RpoB"/>
    <property type="match status" value="1"/>
</dbReference>
<dbReference type="InterPro" id="IPR019462">
    <property type="entry name" value="DNA-dir_RNA_pol_bsu_external_1"/>
</dbReference>
<dbReference type="InterPro" id="IPR015712">
    <property type="entry name" value="DNA-dir_RNA_pol_su2"/>
</dbReference>
<dbReference type="InterPro" id="IPR007120">
    <property type="entry name" value="DNA-dir_RNAP_su2_dom"/>
</dbReference>
<dbReference type="InterPro" id="IPR037033">
    <property type="entry name" value="DNA-dir_RNAP_su2_hyb_sf"/>
</dbReference>
<dbReference type="InterPro" id="IPR010243">
    <property type="entry name" value="RNA_pol_bsu_bac"/>
</dbReference>
<dbReference type="InterPro" id="IPR007121">
    <property type="entry name" value="RNA_pol_bsu_CS"/>
</dbReference>
<dbReference type="InterPro" id="IPR007644">
    <property type="entry name" value="RNA_pol_bsu_protrusion"/>
</dbReference>
<dbReference type="InterPro" id="IPR007642">
    <property type="entry name" value="RNA_pol_Rpb2_2"/>
</dbReference>
<dbReference type="InterPro" id="IPR037034">
    <property type="entry name" value="RNA_pol_Rpb2_2_sf"/>
</dbReference>
<dbReference type="InterPro" id="IPR007645">
    <property type="entry name" value="RNA_pol_Rpb2_3"/>
</dbReference>
<dbReference type="InterPro" id="IPR007641">
    <property type="entry name" value="RNA_pol_Rpb2_7"/>
</dbReference>
<dbReference type="InterPro" id="IPR014724">
    <property type="entry name" value="RNA_pol_RPB2_OB-fold"/>
</dbReference>
<dbReference type="NCBIfam" id="NF001616">
    <property type="entry name" value="PRK00405.1"/>
    <property type="match status" value="1"/>
</dbReference>
<dbReference type="NCBIfam" id="TIGR02013">
    <property type="entry name" value="rpoB"/>
    <property type="match status" value="1"/>
</dbReference>
<dbReference type="PANTHER" id="PTHR20856">
    <property type="entry name" value="DNA-DIRECTED RNA POLYMERASE I SUBUNIT 2"/>
    <property type="match status" value="1"/>
</dbReference>
<dbReference type="Pfam" id="PF04563">
    <property type="entry name" value="RNA_pol_Rpb2_1"/>
    <property type="match status" value="1"/>
</dbReference>
<dbReference type="Pfam" id="PF04561">
    <property type="entry name" value="RNA_pol_Rpb2_2"/>
    <property type="match status" value="2"/>
</dbReference>
<dbReference type="Pfam" id="PF04565">
    <property type="entry name" value="RNA_pol_Rpb2_3"/>
    <property type="match status" value="1"/>
</dbReference>
<dbReference type="Pfam" id="PF10385">
    <property type="entry name" value="RNA_pol_Rpb2_45"/>
    <property type="match status" value="1"/>
</dbReference>
<dbReference type="Pfam" id="PF00562">
    <property type="entry name" value="RNA_pol_Rpb2_6"/>
    <property type="match status" value="1"/>
</dbReference>
<dbReference type="Pfam" id="PF04560">
    <property type="entry name" value="RNA_pol_Rpb2_7"/>
    <property type="match status" value="1"/>
</dbReference>
<dbReference type="SUPFAM" id="SSF64484">
    <property type="entry name" value="beta and beta-prime subunits of DNA dependent RNA-polymerase"/>
    <property type="match status" value="1"/>
</dbReference>
<dbReference type="PROSITE" id="PS01166">
    <property type="entry name" value="RNA_POL_BETA"/>
    <property type="match status" value="1"/>
</dbReference>
<comment type="function">
    <text evidence="1">DNA-dependent RNA polymerase catalyzes the transcription of DNA into RNA using the four ribonucleoside triphosphates as substrates.</text>
</comment>
<comment type="catalytic activity">
    <reaction evidence="1">
        <text>RNA(n) + a ribonucleoside 5'-triphosphate = RNA(n+1) + diphosphate</text>
        <dbReference type="Rhea" id="RHEA:21248"/>
        <dbReference type="Rhea" id="RHEA-COMP:14527"/>
        <dbReference type="Rhea" id="RHEA-COMP:17342"/>
        <dbReference type="ChEBI" id="CHEBI:33019"/>
        <dbReference type="ChEBI" id="CHEBI:61557"/>
        <dbReference type="ChEBI" id="CHEBI:140395"/>
        <dbReference type="EC" id="2.7.7.6"/>
    </reaction>
</comment>
<comment type="subunit">
    <text evidence="1">The RNAP catalytic core consists of 2 alpha, 1 beta, 1 beta' and 1 omega subunit. When a sigma factor is associated with the core the holoenzyme is formed, which can initiate transcription.</text>
</comment>
<comment type="similarity">
    <text evidence="1">Belongs to the RNA polymerase beta chain family.</text>
</comment>
<accession>A6GYU0</accession>
<reference key="1">
    <citation type="journal article" date="2007" name="Nat. Biotechnol.">
        <title>Complete genome sequence of the fish pathogen Flavobacterium psychrophilum.</title>
        <authorList>
            <person name="Duchaud E."/>
            <person name="Boussaha M."/>
            <person name="Loux V."/>
            <person name="Bernardet J.-F."/>
            <person name="Michel C."/>
            <person name="Kerouault B."/>
            <person name="Mondot S."/>
            <person name="Nicolas P."/>
            <person name="Bossy R."/>
            <person name="Caron C."/>
            <person name="Bessieres P."/>
            <person name="Gibrat J.-F."/>
            <person name="Claverol S."/>
            <person name="Dumetz F."/>
            <person name="Le Henaff M."/>
            <person name="Benmansour A."/>
        </authorList>
    </citation>
    <scope>NUCLEOTIDE SEQUENCE [LARGE SCALE GENOMIC DNA]</scope>
    <source>
        <strain>ATCC 49511 / DSM 21280 / CIP 103535 / JIP02/86</strain>
    </source>
</reference>
<feature type="chain" id="PRO_0000300314" description="DNA-directed RNA polymerase subunit beta">
    <location>
        <begin position="1"/>
        <end position="1270"/>
    </location>
</feature>
<evidence type="ECO:0000255" key="1">
    <source>
        <dbReference type="HAMAP-Rule" id="MF_01321"/>
    </source>
</evidence>
<proteinExistence type="inferred from homology"/>